<accession>A7HAH8</accession>
<comment type="function">
    <text evidence="1">Catalyzes the methylthiolation of N6-(dimethylallyl)adenosine (i(6)A), leading to the formation of 2-methylthio-N6-(dimethylallyl)adenosine (ms(2)i(6)A) at position 37 in tRNAs that read codons beginning with uridine.</text>
</comment>
<comment type="catalytic activity">
    <reaction evidence="1">
        <text>N(6)-dimethylallyladenosine(37) in tRNA + (sulfur carrier)-SH + AH2 + 2 S-adenosyl-L-methionine = 2-methylsulfanyl-N(6)-dimethylallyladenosine(37) in tRNA + (sulfur carrier)-H + 5'-deoxyadenosine + L-methionine + A + S-adenosyl-L-homocysteine + 2 H(+)</text>
        <dbReference type="Rhea" id="RHEA:37067"/>
        <dbReference type="Rhea" id="RHEA-COMP:10375"/>
        <dbReference type="Rhea" id="RHEA-COMP:10376"/>
        <dbReference type="Rhea" id="RHEA-COMP:14737"/>
        <dbReference type="Rhea" id="RHEA-COMP:14739"/>
        <dbReference type="ChEBI" id="CHEBI:13193"/>
        <dbReference type="ChEBI" id="CHEBI:15378"/>
        <dbReference type="ChEBI" id="CHEBI:17319"/>
        <dbReference type="ChEBI" id="CHEBI:17499"/>
        <dbReference type="ChEBI" id="CHEBI:29917"/>
        <dbReference type="ChEBI" id="CHEBI:57844"/>
        <dbReference type="ChEBI" id="CHEBI:57856"/>
        <dbReference type="ChEBI" id="CHEBI:59789"/>
        <dbReference type="ChEBI" id="CHEBI:64428"/>
        <dbReference type="ChEBI" id="CHEBI:74415"/>
        <dbReference type="ChEBI" id="CHEBI:74417"/>
        <dbReference type="EC" id="2.8.4.3"/>
    </reaction>
</comment>
<comment type="cofactor">
    <cofactor evidence="1">
        <name>[4Fe-4S] cluster</name>
        <dbReference type="ChEBI" id="CHEBI:49883"/>
    </cofactor>
    <text evidence="1">Binds 2 [4Fe-4S] clusters. One cluster is coordinated with 3 cysteines and an exchangeable S-adenosyl-L-methionine.</text>
</comment>
<comment type="subunit">
    <text evidence="1">Monomer.</text>
</comment>
<comment type="subcellular location">
    <subcellularLocation>
        <location evidence="1">Cytoplasm</location>
    </subcellularLocation>
</comment>
<comment type="similarity">
    <text evidence="1">Belongs to the methylthiotransferase family. MiaB subfamily.</text>
</comment>
<evidence type="ECO:0000255" key="1">
    <source>
        <dbReference type="HAMAP-Rule" id="MF_01864"/>
    </source>
</evidence>
<evidence type="ECO:0000255" key="2">
    <source>
        <dbReference type="PROSITE-ProRule" id="PRU01266"/>
    </source>
</evidence>
<gene>
    <name evidence="1" type="primary">miaB</name>
    <name type="ordered locus">Anae109_1518</name>
</gene>
<reference key="1">
    <citation type="journal article" date="2015" name="Genome Announc.">
        <title>Complete genome sequence of Anaeromyxobacter sp. Fw109-5, an anaerobic, metal-reducing bacterium isolated from a contaminated subsurface environment.</title>
        <authorList>
            <person name="Hwang C."/>
            <person name="Copeland A."/>
            <person name="Lucas S."/>
            <person name="Lapidus A."/>
            <person name="Barry K."/>
            <person name="Glavina Del Rio T."/>
            <person name="Dalin E."/>
            <person name="Tice H."/>
            <person name="Pitluck S."/>
            <person name="Sims D."/>
            <person name="Brettin T."/>
            <person name="Bruce D.C."/>
            <person name="Detter J.C."/>
            <person name="Han C.S."/>
            <person name="Schmutz J."/>
            <person name="Larimer F.W."/>
            <person name="Land M.L."/>
            <person name="Hauser L.J."/>
            <person name="Kyrpides N."/>
            <person name="Lykidis A."/>
            <person name="Richardson P."/>
            <person name="Belieav A."/>
            <person name="Sanford R.A."/>
            <person name="Loeffler F.E."/>
            <person name="Fields M.W."/>
        </authorList>
    </citation>
    <scope>NUCLEOTIDE SEQUENCE [LARGE SCALE GENOMIC DNA]</scope>
    <source>
        <strain>Fw109-5</strain>
    </source>
</reference>
<name>MIAB_ANADF</name>
<dbReference type="EC" id="2.8.4.3" evidence="1"/>
<dbReference type="EMBL" id="CP000769">
    <property type="protein sequence ID" value="ABS25724.1"/>
    <property type="molecule type" value="Genomic_DNA"/>
</dbReference>
<dbReference type="RefSeq" id="WP_011985830.1">
    <property type="nucleotide sequence ID" value="NC_009675.1"/>
</dbReference>
<dbReference type="SMR" id="A7HAH8"/>
<dbReference type="STRING" id="404589.Anae109_1518"/>
<dbReference type="KEGG" id="afw:Anae109_1518"/>
<dbReference type="eggNOG" id="COG0621">
    <property type="taxonomic scope" value="Bacteria"/>
</dbReference>
<dbReference type="HOGENOM" id="CLU_018697_2_0_7"/>
<dbReference type="OrthoDB" id="9805215at2"/>
<dbReference type="Proteomes" id="UP000006382">
    <property type="component" value="Chromosome"/>
</dbReference>
<dbReference type="GO" id="GO:0005829">
    <property type="term" value="C:cytosol"/>
    <property type="evidence" value="ECO:0007669"/>
    <property type="project" value="TreeGrafter"/>
</dbReference>
<dbReference type="GO" id="GO:0051539">
    <property type="term" value="F:4 iron, 4 sulfur cluster binding"/>
    <property type="evidence" value="ECO:0007669"/>
    <property type="project" value="UniProtKB-UniRule"/>
</dbReference>
<dbReference type="GO" id="GO:0046872">
    <property type="term" value="F:metal ion binding"/>
    <property type="evidence" value="ECO:0007669"/>
    <property type="project" value="UniProtKB-KW"/>
</dbReference>
<dbReference type="GO" id="GO:0035597">
    <property type="term" value="F:N6-isopentenyladenosine methylthiotransferase activity"/>
    <property type="evidence" value="ECO:0007669"/>
    <property type="project" value="TreeGrafter"/>
</dbReference>
<dbReference type="CDD" id="cd01335">
    <property type="entry name" value="Radical_SAM"/>
    <property type="match status" value="1"/>
</dbReference>
<dbReference type="FunFam" id="3.40.50.12160:FF:000003">
    <property type="entry name" value="CDK5 regulatory subunit-associated protein 1"/>
    <property type="match status" value="1"/>
</dbReference>
<dbReference type="FunFam" id="3.80.30.20:FF:000001">
    <property type="entry name" value="tRNA-2-methylthio-N(6)-dimethylallyladenosine synthase 2"/>
    <property type="match status" value="1"/>
</dbReference>
<dbReference type="Gene3D" id="3.40.50.12160">
    <property type="entry name" value="Methylthiotransferase, N-terminal domain"/>
    <property type="match status" value="1"/>
</dbReference>
<dbReference type="Gene3D" id="3.80.30.20">
    <property type="entry name" value="tm_1862 like domain"/>
    <property type="match status" value="1"/>
</dbReference>
<dbReference type="HAMAP" id="MF_01864">
    <property type="entry name" value="tRNA_metthiotr_MiaB"/>
    <property type="match status" value="1"/>
</dbReference>
<dbReference type="InterPro" id="IPR006638">
    <property type="entry name" value="Elp3/MiaA/NifB-like_rSAM"/>
</dbReference>
<dbReference type="InterPro" id="IPR005839">
    <property type="entry name" value="Methylthiotransferase"/>
</dbReference>
<dbReference type="InterPro" id="IPR013848">
    <property type="entry name" value="Methylthiotransferase_N"/>
</dbReference>
<dbReference type="InterPro" id="IPR038135">
    <property type="entry name" value="Methylthiotransferase_N_sf"/>
</dbReference>
<dbReference type="InterPro" id="IPR006463">
    <property type="entry name" value="MiaB_methiolase"/>
</dbReference>
<dbReference type="InterPro" id="IPR007197">
    <property type="entry name" value="rSAM"/>
</dbReference>
<dbReference type="InterPro" id="IPR023404">
    <property type="entry name" value="rSAM_horseshoe"/>
</dbReference>
<dbReference type="InterPro" id="IPR002792">
    <property type="entry name" value="TRAM_dom"/>
</dbReference>
<dbReference type="NCBIfam" id="TIGR01574">
    <property type="entry name" value="miaB-methiolase"/>
    <property type="match status" value="1"/>
</dbReference>
<dbReference type="NCBIfam" id="TIGR00089">
    <property type="entry name" value="MiaB/RimO family radical SAM methylthiotransferase"/>
    <property type="match status" value="1"/>
</dbReference>
<dbReference type="PANTHER" id="PTHR43020">
    <property type="entry name" value="CDK5 REGULATORY SUBUNIT-ASSOCIATED PROTEIN 1"/>
    <property type="match status" value="1"/>
</dbReference>
<dbReference type="PANTHER" id="PTHR43020:SF2">
    <property type="entry name" value="MITOCHONDRIAL TRNA METHYLTHIOTRANSFERASE CDK5RAP1"/>
    <property type="match status" value="1"/>
</dbReference>
<dbReference type="Pfam" id="PF04055">
    <property type="entry name" value="Radical_SAM"/>
    <property type="match status" value="1"/>
</dbReference>
<dbReference type="Pfam" id="PF01938">
    <property type="entry name" value="TRAM"/>
    <property type="match status" value="1"/>
</dbReference>
<dbReference type="Pfam" id="PF00919">
    <property type="entry name" value="UPF0004"/>
    <property type="match status" value="1"/>
</dbReference>
<dbReference type="SFLD" id="SFLDF00273">
    <property type="entry name" value="(dimethylallyl)adenosine_tRNA"/>
    <property type="match status" value="1"/>
</dbReference>
<dbReference type="SFLD" id="SFLDG01082">
    <property type="entry name" value="B12-binding_domain_containing"/>
    <property type="match status" value="1"/>
</dbReference>
<dbReference type="SFLD" id="SFLDG01061">
    <property type="entry name" value="methylthiotransferase"/>
    <property type="match status" value="1"/>
</dbReference>
<dbReference type="SMART" id="SM00729">
    <property type="entry name" value="Elp3"/>
    <property type="match status" value="1"/>
</dbReference>
<dbReference type="SUPFAM" id="SSF102114">
    <property type="entry name" value="Radical SAM enzymes"/>
    <property type="match status" value="1"/>
</dbReference>
<dbReference type="PROSITE" id="PS51449">
    <property type="entry name" value="MTTASE_N"/>
    <property type="match status" value="1"/>
</dbReference>
<dbReference type="PROSITE" id="PS51918">
    <property type="entry name" value="RADICAL_SAM"/>
    <property type="match status" value="1"/>
</dbReference>
<dbReference type="PROSITE" id="PS50926">
    <property type="entry name" value="TRAM"/>
    <property type="match status" value="1"/>
</dbReference>
<feature type="chain" id="PRO_0000374111" description="tRNA-2-methylthio-N(6)-dimethylallyladenosine synthase">
    <location>
        <begin position="1"/>
        <end position="460"/>
    </location>
</feature>
<feature type="domain" description="MTTase N-terminal" evidence="1">
    <location>
        <begin position="23"/>
        <end position="138"/>
    </location>
</feature>
<feature type="domain" description="Radical SAM core" evidence="2">
    <location>
        <begin position="162"/>
        <end position="394"/>
    </location>
</feature>
<feature type="domain" description="TRAM" evidence="1">
    <location>
        <begin position="397"/>
        <end position="460"/>
    </location>
</feature>
<feature type="binding site" evidence="1">
    <location>
        <position position="32"/>
    </location>
    <ligand>
        <name>[4Fe-4S] cluster</name>
        <dbReference type="ChEBI" id="CHEBI:49883"/>
        <label>1</label>
    </ligand>
</feature>
<feature type="binding site" evidence="1">
    <location>
        <position position="68"/>
    </location>
    <ligand>
        <name>[4Fe-4S] cluster</name>
        <dbReference type="ChEBI" id="CHEBI:49883"/>
        <label>1</label>
    </ligand>
</feature>
<feature type="binding site" evidence="1">
    <location>
        <position position="101"/>
    </location>
    <ligand>
        <name>[4Fe-4S] cluster</name>
        <dbReference type="ChEBI" id="CHEBI:49883"/>
        <label>1</label>
    </ligand>
</feature>
<feature type="binding site" evidence="1">
    <location>
        <position position="176"/>
    </location>
    <ligand>
        <name>[4Fe-4S] cluster</name>
        <dbReference type="ChEBI" id="CHEBI:49883"/>
        <label>2</label>
        <note>4Fe-4S-S-AdoMet</note>
    </ligand>
</feature>
<feature type="binding site" evidence="1">
    <location>
        <position position="180"/>
    </location>
    <ligand>
        <name>[4Fe-4S] cluster</name>
        <dbReference type="ChEBI" id="CHEBI:49883"/>
        <label>2</label>
        <note>4Fe-4S-S-AdoMet</note>
    </ligand>
</feature>
<feature type="binding site" evidence="1">
    <location>
        <position position="183"/>
    </location>
    <ligand>
        <name>[4Fe-4S] cluster</name>
        <dbReference type="ChEBI" id="CHEBI:49883"/>
        <label>2</label>
        <note>4Fe-4S-S-AdoMet</note>
    </ligand>
</feature>
<organism>
    <name type="scientific">Anaeromyxobacter sp. (strain Fw109-5)</name>
    <dbReference type="NCBI Taxonomy" id="404589"/>
    <lineage>
        <taxon>Bacteria</taxon>
        <taxon>Pseudomonadati</taxon>
        <taxon>Myxococcota</taxon>
        <taxon>Myxococcia</taxon>
        <taxon>Myxococcales</taxon>
        <taxon>Cystobacterineae</taxon>
        <taxon>Anaeromyxobacteraceae</taxon>
        <taxon>Anaeromyxobacter</taxon>
    </lineage>
</organism>
<sequence>MTDLVSLSPKPASAPGTRPAAARKVYVHTFGCQMNASDSDRMIELLGRHAFARAETPDDADLILLNTCAVREKAEQKLLSALGRYREVKARRGALIAVSGCVAQQEKDRLLARVPYVDFVFGPDNIGKLPEMVARAERERFAETGWMDSQDYVFPQADPEAARGRPTAFVTAMKGCDNVCAFCIVPHTRGREVSRAFPEIVAECASLAEVGVREVTLIGQNVNSYAGGCTFAELLRRVAAVPGIARIRFTTSHPHDLSDALVAVFRDEPKVMPHFHLPVQSGSDAVLARMRRDYTVAEYLDRFDRLRAARPGIAITTDFIVGFPGEGEADFEGSLALLERARFEQSFSFLFSPRPKTVANLRLGTAPEWQEIPRAVAVERLERLQAAQRRIAAAALAAELGKVVEVLVEGASDEPGERLGRTPENRVVHLAADEAGAPTGALVRARITRAGGSSLSGTPA</sequence>
<keyword id="KW-0004">4Fe-4S</keyword>
<keyword id="KW-0963">Cytoplasm</keyword>
<keyword id="KW-0408">Iron</keyword>
<keyword id="KW-0411">Iron-sulfur</keyword>
<keyword id="KW-0479">Metal-binding</keyword>
<keyword id="KW-1185">Reference proteome</keyword>
<keyword id="KW-0949">S-adenosyl-L-methionine</keyword>
<keyword id="KW-0808">Transferase</keyword>
<keyword id="KW-0819">tRNA processing</keyword>
<protein>
    <recommendedName>
        <fullName evidence="1">tRNA-2-methylthio-N(6)-dimethylallyladenosine synthase</fullName>
        <ecNumber evidence="1">2.8.4.3</ecNumber>
    </recommendedName>
    <alternativeName>
        <fullName evidence="1">(Dimethylallyl)adenosine tRNA methylthiotransferase MiaB</fullName>
    </alternativeName>
    <alternativeName>
        <fullName evidence="1">tRNA-i(6)A37 methylthiotransferase</fullName>
    </alternativeName>
</protein>
<proteinExistence type="inferred from homology"/>